<gene>
    <name evidence="19" type="primary">emb</name>
    <name evidence="18" type="synonym">Crm1</name>
    <name type="ORF">CG13387</name>
</gene>
<protein>
    <recommendedName>
        <fullName>Exportin-1</fullName>
    </recommendedName>
    <alternativeName>
        <fullName>Chromosome region maintenance 1 protein</fullName>
    </alternativeName>
    <alternativeName>
        <fullName>Protein embargoed</fullName>
    </alternativeName>
</protein>
<organism>
    <name type="scientific">Drosophila melanogaster</name>
    <name type="common">Fruit fly</name>
    <dbReference type="NCBI Taxonomy" id="7227"/>
    <lineage>
        <taxon>Eukaryota</taxon>
        <taxon>Metazoa</taxon>
        <taxon>Ecdysozoa</taxon>
        <taxon>Arthropoda</taxon>
        <taxon>Hexapoda</taxon>
        <taxon>Insecta</taxon>
        <taxon>Pterygota</taxon>
        <taxon>Neoptera</taxon>
        <taxon>Endopterygota</taxon>
        <taxon>Diptera</taxon>
        <taxon>Brachycera</taxon>
        <taxon>Muscomorpha</taxon>
        <taxon>Ephydroidea</taxon>
        <taxon>Drosophilidae</taxon>
        <taxon>Drosophila</taxon>
        <taxon>Sophophora</taxon>
    </lineage>
</organism>
<dbReference type="EMBL" id="AF179360">
    <property type="protein sequence ID" value="AAD55778.1"/>
    <property type="molecule type" value="mRNA"/>
</dbReference>
<dbReference type="EMBL" id="AF179361">
    <property type="protein sequence ID" value="AAD55780.1"/>
    <property type="molecule type" value="Genomic_DNA"/>
</dbReference>
<dbReference type="EMBL" id="AF190557">
    <property type="protein sequence ID" value="AAF01341.1"/>
    <property type="molecule type" value="mRNA"/>
</dbReference>
<dbReference type="EMBL" id="AJ249178">
    <property type="protein sequence ID" value="CAB53566.1"/>
    <property type="molecule type" value="mRNA"/>
</dbReference>
<dbReference type="EMBL" id="AE014134">
    <property type="protein sequence ID" value="AAG22423.2"/>
    <property type="molecule type" value="Genomic_DNA"/>
</dbReference>
<dbReference type="EMBL" id="AY089558">
    <property type="protein sequence ID" value="AAL90296.1"/>
    <property type="molecule type" value="mRNA"/>
</dbReference>
<dbReference type="RefSeq" id="NP_001303316.1">
    <property type="nucleotide sequence ID" value="NM_001316387.1"/>
</dbReference>
<dbReference type="RefSeq" id="NP_723391.2">
    <property type="nucleotide sequence ID" value="NM_164818.2"/>
</dbReference>
<dbReference type="SMR" id="Q9TVM2"/>
<dbReference type="BioGRID" id="60290">
    <property type="interactions" value="21"/>
</dbReference>
<dbReference type="DIP" id="DIP-21235N"/>
<dbReference type="FunCoup" id="Q9TVM2">
    <property type="interactions" value="3508"/>
</dbReference>
<dbReference type="IntAct" id="Q9TVM2">
    <property type="interactions" value="69"/>
</dbReference>
<dbReference type="MINT" id="Q9TVM2"/>
<dbReference type="STRING" id="7227.FBpp0079278"/>
<dbReference type="PaxDb" id="7227-FBpp0079278"/>
<dbReference type="DNASU" id="34167"/>
<dbReference type="EnsemblMetazoa" id="FBtr0079663">
    <property type="protein sequence ID" value="FBpp0079278"/>
    <property type="gene ID" value="FBgn0020497"/>
</dbReference>
<dbReference type="EnsemblMetazoa" id="FBtr0346708">
    <property type="protein sequence ID" value="FBpp0312321"/>
    <property type="gene ID" value="FBgn0020497"/>
</dbReference>
<dbReference type="GeneID" id="34167"/>
<dbReference type="KEGG" id="dme:Dmel_CG13387"/>
<dbReference type="AGR" id="FB:FBgn0020497"/>
<dbReference type="CTD" id="133418"/>
<dbReference type="FlyBase" id="FBgn0020497">
    <property type="gene designation" value="emb"/>
</dbReference>
<dbReference type="VEuPathDB" id="VectorBase:FBgn0020497"/>
<dbReference type="eggNOG" id="KOG2020">
    <property type="taxonomic scope" value="Eukaryota"/>
</dbReference>
<dbReference type="GeneTree" id="ENSGT00940000153408"/>
<dbReference type="HOGENOM" id="CLU_011906_0_0_1"/>
<dbReference type="InParanoid" id="Q9TVM2"/>
<dbReference type="OMA" id="WAFKHNN"/>
<dbReference type="OrthoDB" id="27218at2759"/>
<dbReference type="PhylomeDB" id="Q9TVM2"/>
<dbReference type="Reactome" id="R-DME-3769402">
    <property type="pathway name" value="Deactivation of the beta-catenin transactivating complex"/>
</dbReference>
<dbReference type="Reactome" id="R-DME-450520">
    <property type="pathway name" value="HuR (ELAVL1) binds and stabilizes mRNA"/>
</dbReference>
<dbReference type="Reactome" id="R-DME-69273">
    <property type="pathway name" value="Cyclin A/B1/B2 associated events during G2/M transition"/>
</dbReference>
<dbReference type="Reactome" id="R-DME-9634638">
    <property type="pathway name" value="Estrogen-dependent nuclear events downstream of ESR-membrane signaling"/>
</dbReference>
<dbReference type="Reactome" id="R-DME-9707616">
    <property type="pathway name" value="Heme signaling"/>
</dbReference>
<dbReference type="Reactome" id="R-DME-9856649">
    <property type="pathway name" value="Transcriptional and post-translational regulation of MITF-M expression and activity"/>
</dbReference>
<dbReference type="SignaLink" id="Q9TVM2"/>
<dbReference type="BioGRID-ORCS" id="34167">
    <property type="hits" value="1 hit in 1 CRISPR screen"/>
</dbReference>
<dbReference type="GenomeRNAi" id="34167"/>
<dbReference type="PRO" id="PR:Q9TVM2"/>
<dbReference type="Proteomes" id="UP000000803">
    <property type="component" value="Chromosome 2L"/>
</dbReference>
<dbReference type="Bgee" id="FBgn0020497">
    <property type="expression patterns" value="Expressed in wing disc and 276 other cell types or tissues"/>
</dbReference>
<dbReference type="ExpressionAtlas" id="Q9TVM2">
    <property type="expression patterns" value="baseline and differential"/>
</dbReference>
<dbReference type="GO" id="GO:0005737">
    <property type="term" value="C:cytoplasm"/>
    <property type="evidence" value="ECO:0000318"/>
    <property type="project" value="GO_Central"/>
</dbReference>
<dbReference type="GO" id="GO:0031965">
    <property type="term" value="C:nuclear membrane"/>
    <property type="evidence" value="ECO:0000314"/>
    <property type="project" value="FlyBase"/>
</dbReference>
<dbReference type="GO" id="GO:0005643">
    <property type="term" value="C:nuclear pore"/>
    <property type="evidence" value="ECO:0000315"/>
    <property type="project" value="UniProtKB"/>
</dbReference>
<dbReference type="GO" id="GO:0005634">
    <property type="term" value="C:nucleus"/>
    <property type="evidence" value="ECO:0000314"/>
    <property type="project" value="FlyBase"/>
</dbReference>
<dbReference type="GO" id="GO:0005049">
    <property type="term" value="F:nuclear export signal receptor activity"/>
    <property type="evidence" value="ECO:0000314"/>
    <property type="project" value="UniProtKB"/>
</dbReference>
<dbReference type="GO" id="GO:0031267">
    <property type="term" value="F:small GTPase binding"/>
    <property type="evidence" value="ECO:0007669"/>
    <property type="project" value="InterPro"/>
</dbReference>
<dbReference type="GO" id="GO:0007099">
    <property type="term" value="P:centriole replication"/>
    <property type="evidence" value="ECO:0000315"/>
    <property type="project" value="FlyBase"/>
</dbReference>
<dbReference type="GO" id="GO:0051028">
    <property type="term" value="P:mRNA transport"/>
    <property type="evidence" value="ECO:0007669"/>
    <property type="project" value="UniProtKB-KW"/>
</dbReference>
<dbReference type="GO" id="GO:0051168">
    <property type="term" value="P:nuclear export"/>
    <property type="evidence" value="ECO:0000314"/>
    <property type="project" value="FlyBase"/>
</dbReference>
<dbReference type="GO" id="GO:0051292">
    <property type="term" value="P:nuclear pore complex assembly"/>
    <property type="evidence" value="ECO:0000315"/>
    <property type="project" value="UniProtKB"/>
</dbReference>
<dbReference type="GO" id="GO:0006611">
    <property type="term" value="P:protein export from nucleus"/>
    <property type="evidence" value="ECO:0000315"/>
    <property type="project" value="UniProtKB"/>
</dbReference>
<dbReference type="GO" id="GO:0015031">
    <property type="term" value="P:protein transport"/>
    <property type="evidence" value="ECO:0000314"/>
    <property type="project" value="UniProtKB"/>
</dbReference>
<dbReference type="GO" id="GO:1900037">
    <property type="term" value="P:regulation of cellular response to hypoxia"/>
    <property type="evidence" value="ECO:0000315"/>
    <property type="project" value="FlyBase"/>
</dbReference>
<dbReference type="GO" id="GO:0000055">
    <property type="term" value="P:ribosomal large subunit export from nucleus"/>
    <property type="evidence" value="ECO:0000318"/>
    <property type="project" value="GO_Central"/>
</dbReference>
<dbReference type="GO" id="GO:0000056">
    <property type="term" value="P:ribosomal small subunit export from nucleus"/>
    <property type="evidence" value="ECO:0000315"/>
    <property type="project" value="FlyBase"/>
</dbReference>
<dbReference type="FunFam" id="1.25.10.10:FF:001255">
    <property type="entry name" value="Exportin 1"/>
    <property type="match status" value="1"/>
</dbReference>
<dbReference type="Gene3D" id="1.25.10.10">
    <property type="entry name" value="Leucine-rich Repeat Variant"/>
    <property type="match status" value="1"/>
</dbReference>
<dbReference type="InterPro" id="IPR011989">
    <property type="entry name" value="ARM-like"/>
</dbReference>
<dbReference type="InterPro" id="IPR016024">
    <property type="entry name" value="ARM-type_fold"/>
</dbReference>
<dbReference type="InterPro" id="IPR041123">
    <property type="entry name" value="CRM1_repeat"/>
</dbReference>
<dbReference type="InterPro" id="IPR041235">
    <property type="entry name" value="Exp1_repeat_2"/>
</dbReference>
<dbReference type="InterPro" id="IPR013598">
    <property type="entry name" value="Exportin-1/Importin-b-like"/>
</dbReference>
<dbReference type="InterPro" id="IPR001494">
    <property type="entry name" value="Importin-beta_N"/>
</dbReference>
<dbReference type="InterPro" id="IPR045065">
    <property type="entry name" value="XPO1/5"/>
</dbReference>
<dbReference type="InterPro" id="IPR014877">
    <property type="entry name" value="XPO1_C_dom"/>
</dbReference>
<dbReference type="InterPro" id="IPR040485">
    <property type="entry name" value="XPO1_repeat_3"/>
</dbReference>
<dbReference type="PANTHER" id="PTHR11223">
    <property type="entry name" value="EXPORTIN 1/5"/>
    <property type="match status" value="1"/>
</dbReference>
<dbReference type="PANTHER" id="PTHR11223:SF2">
    <property type="entry name" value="EXPORTIN-1"/>
    <property type="match status" value="1"/>
</dbReference>
<dbReference type="Pfam" id="PF08767">
    <property type="entry name" value="CRM1_C"/>
    <property type="match status" value="1"/>
</dbReference>
<dbReference type="Pfam" id="PF18777">
    <property type="entry name" value="CRM1_repeat"/>
    <property type="match status" value="1"/>
</dbReference>
<dbReference type="Pfam" id="PF18784">
    <property type="entry name" value="CRM1_repeat_2"/>
    <property type="match status" value="1"/>
</dbReference>
<dbReference type="Pfam" id="PF18787">
    <property type="entry name" value="CRM1_repeat_3"/>
    <property type="match status" value="1"/>
</dbReference>
<dbReference type="Pfam" id="PF03810">
    <property type="entry name" value="IBN_N"/>
    <property type="match status" value="1"/>
</dbReference>
<dbReference type="Pfam" id="PF08389">
    <property type="entry name" value="Xpo1"/>
    <property type="match status" value="1"/>
</dbReference>
<dbReference type="SMART" id="SM01102">
    <property type="entry name" value="CRM1_C"/>
    <property type="match status" value="1"/>
</dbReference>
<dbReference type="SMART" id="SM00913">
    <property type="entry name" value="IBN_N"/>
    <property type="match status" value="1"/>
</dbReference>
<dbReference type="SUPFAM" id="SSF48371">
    <property type="entry name" value="ARM repeat"/>
    <property type="match status" value="1"/>
</dbReference>
<dbReference type="PROSITE" id="PS50166">
    <property type="entry name" value="IMPORTIN_B_NT"/>
    <property type="match status" value="1"/>
</dbReference>
<proteinExistence type="evidence at protein level"/>
<comment type="function">
    <text evidence="4 6 8 10 11 12">Receptor for the leucine-rich nuclear export signal (NES) (PubMed:10636888, PubMed:14638854, PubMed:16103875). Binds cooperatively to the NES on its target protein and to the small GTPase Ran in its active GTP-bound form (PubMed:10636888, PubMed:14638854). Involved in the export of dl, RpS2 and the pre-40S ribosome from the nucleus to the cytoplasm (PubMed:14638854, PubMed:17032737, PubMed:25858587). Plays an important role in nuclear pore assembly by mediating nucleoporin condensation and biogenesis of annulate lamellae (PubMed:31626769). Required for the function or maintenance of certain tissues such as brain and gut (PubMed:10924475).</text>
</comment>
<comment type="subunit">
    <text evidence="6 8 9 10">Interacts with Clbn (via its N-terminus) (PubMed:16103875). Associates with the nuclear pore complex via interaction with mbo and Nup214 (PubMed:14638854, PubMed:17032737). Interacts with target proteins containing NES sequences such as actin and dl (PubMed:10924475, PubMed:14638854, PubMed:17032737).</text>
</comment>
<comment type="subcellular location">
    <subcellularLocation>
        <location evidence="10">Nucleus</location>
    </subcellularLocation>
    <subcellularLocation>
        <location evidence="10">Nucleus membrane</location>
        <topology>Peripheral membrane protein</topology>
        <orientation>Nucleoplasmic side</orientation>
    </subcellularLocation>
    <text evidence="10">Localization to the nuclear pore complex is promoted by Nup214.</text>
</comment>
<comment type="tissue specificity">
    <text evidence="6">High expression observed in the developing embryonic brain, hind gut and posterior spiracles shortly before dorsal closure; and in the ventral nerve cord, midgut and somatic musculature shortly after dorsal closure. Expression increases when the tissue is well developed.</text>
</comment>
<comment type="developmental stage">
    <text evidence="6 8">Expressed in the larva (at protein level) (PubMed:14638854). Highly expressed both maternally and zygotically (PubMed:10924475).</text>
</comment>
<comment type="disruption phenotype">
    <text evidence="11 12">RNAi-mediated knockdown results in defects in nuclear export resulting in accumulation of RpS2 and pre-40S ribosome in the nucleus (PubMed:25858587). During oogenesis, mislocalizes Nup358-containing granules to nurse cells and abolishes the formation of annulate lamellae (PubMed:31626769).</text>
</comment>
<comment type="miscellaneous">
    <text evidence="4">Activity inhibited by leptomycin B, which disrupts interaction with the NES and RanGTP.</text>
</comment>
<comment type="similarity">
    <text evidence="1">Belongs to the exportin family.</text>
</comment>
<reference evidence="13 14" key="1">
    <citation type="journal article" date="2000" name="Genetics">
        <title>The Drosophila embargoed gene is required for larval progression and encodes the functional homolog of Schizosaccharomyces Crm1.</title>
        <authorList>
            <person name="Collier S."/>
            <person name="Chan H.Y.E."/>
            <person name="Toda T."/>
            <person name="McKimmie C."/>
            <person name="Johnson G."/>
            <person name="Adler P.N."/>
            <person name="O'Kane C."/>
            <person name="Ashburner M."/>
        </authorList>
    </citation>
    <scope>NUCLEOTIDE SEQUENCE [GENOMIC DNA / MRNA]</scope>
    <scope>FUNCTION</scope>
    <scope>INTERACTION WITH ACTIN</scope>
    <scope>TISSUE SPECIFICITY</scope>
    <scope>DEVELOPMENTAL STAGE</scope>
    <source>
        <strain evidence="6">Oregon-R</strain>
        <tissue evidence="6">Embryo</tissue>
    </source>
</reference>
<reference evidence="13 15" key="2">
    <citation type="journal article" date="2000" name="J. Biol. Chem.">
        <title>A leptomycin B-sensitive homologue of human CRM1 promotes nuclear export of nuclear export sequence-containing proteins in Drosophila cells.</title>
        <authorList>
            <person name="Fasken M.B."/>
            <person name="Saunders R."/>
            <person name="Rosenberg M."/>
            <person name="Brighty D.W."/>
        </authorList>
    </citation>
    <scope>NUCLEOTIDE SEQUENCE [MRNA]</scope>
    <scope>FUNCTION</scope>
    <scope>SUBCELLULAR LOCATION</scope>
</reference>
<reference evidence="18" key="3">
    <citation type="submission" date="1999-08" db="EMBL/GenBank/DDBJ databases">
        <title>Delineation of a modular structered enhancer that gives rise to olfactory organ specific expression of Drosophila1-acylglycerol-3-phosphate O-acyltransferase.</title>
        <authorList>
            <person name="Hovemann B.T."/>
            <person name="Heiermann R."/>
            <person name="Malz J."/>
            <person name="Richardt A."/>
            <person name="Stoertkuhl K.F."/>
            <person name="Sehlmeyer F."/>
        </authorList>
    </citation>
    <scope>NUCLEOTIDE SEQUENCE [MRNA]</scope>
</reference>
<reference evidence="16" key="4">
    <citation type="journal article" date="2000" name="Science">
        <title>The genome sequence of Drosophila melanogaster.</title>
        <authorList>
            <person name="Adams M.D."/>
            <person name="Celniker S.E."/>
            <person name="Holt R.A."/>
            <person name="Evans C.A."/>
            <person name="Gocayne J.D."/>
            <person name="Amanatides P.G."/>
            <person name="Scherer S.E."/>
            <person name="Li P.W."/>
            <person name="Hoskins R.A."/>
            <person name="Galle R.F."/>
            <person name="George R.A."/>
            <person name="Lewis S.E."/>
            <person name="Richards S."/>
            <person name="Ashburner M."/>
            <person name="Henderson S.N."/>
            <person name="Sutton G.G."/>
            <person name="Wortman J.R."/>
            <person name="Yandell M.D."/>
            <person name="Zhang Q."/>
            <person name="Chen L.X."/>
            <person name="Brandon R.C."/>
            <person name="Rogers Y.-H.C."/>
            <person name="Blazej R.G."/>
            <person name="Champe M."/>
            <person name="Pfeiffer B.D."/>
            <person name="Wan K.H."/>
            <person name="Doyle C."/>
            <person name="Baxter E.G."/>
            <person name="Helt G."/>
            <person name="Nelson C.R."/>
            <person name="Miklos G.L.G."/>
            <person name="Abril J.F."/>
            <person name="Agbayani A."/>
            <person name="An H.-J."/>
            <person name="Andrews-Pfannkoch C."/>
            <person name="Baldwin D."/>
            <person name="Ballew R.M."/>
            <person name="Basu A."/>
            <person name="Baxendale J."/>
            <person name="Bayraktaroglu L."/>
            <person name="Beasley E.M."/>
            <person name="Beeson K.Y."/>
            <person name="Benos P.V."/>
            <person name="Berman B.P."/>
            <person name="Bhandari D."/>
            <person name="Bolshakov S."/>
            <person name="Borkova D."/>
            <person name="Botchan M.R."/>
            <person name="Bouck J."/>
            <person name="Brokstein P."/>
            <person name="Brottier P."/>
            <person name="Burtis K.C."/>
            <person name="Busam D.A."/>
            <person name="Butler H."/>
            <person name="Cadieu E."/>
            <person name="Center A."/>
            <person name="Chandra I."/>
            <person name="Cherry J.M."/>
            <person name="Cawley S."/>
            <person name="Dahlke C."/>
            <person name="Davenport L.B."/>
            <person name="Davies P."/>
            <person name="de Pablos B."/>
            <person name="Delcher A."/>
            <person name="Deng Z."/>
            <person name="Mays A.D."/>
            <person name="Dew I."/>
            <person name="Dietz S.M."/>
            <person name="Dodson K."/>
            <person name="Doup L.E."/>
            <person name="Downes M."/>
            <person name="Dugan-Rocha S."/>
            <person name="Dunkov B.C."/>
            <person name="Dunn P."/>
            <person name="Durbin K.J."/>
            <person name="Evangelista C.C."/>
            <person name="Ferraz C."/>
            <person name="Ferriera S."/>
            <person name="Fleischmann W."/>
            <person name="Fosler C."/>
            <person name="Gabrielian A.E."/>
            <person name="Garg N.S."/>
            <person name="Gelbart W.M."/>
            <person name="Glasser K."/>
            <person name="Glodek A."/>
            <person name="Gong F."/>
            <person name="Gorrell J.H."/>
            <person name="Gu Z."/>
            <person name="Guan P."/>
            <person name="Harris M."/>
            <person name="Harris N.L."/>
            <person name="Harvey D.A."/>
            <person name="Heiman T.J."/>
            <person name="Hernandez J.R."/>
            <person name="Houck J."/>
            <person name="Hostin D."/>
            <person name="Houston K.A."/>
            <person name="Howland T.J."/>
            <person name="Wei M.-H."/>
            <person name="Ibegwam C."/>
            <person name="Jalali M."/>
            <person name="Kalush F."/>
            <person name="Karpen G.H."/>
            <person name="Ke Z."/>
            <person name="Kennison J.A."/>
            <person name="Ketchum K.A."/>
            <person name="Kimmel B.E."/>
            <person name="Kodira C.D."/>
            <person name="Kraft C.L."/>
            <person name="Kravitz S."/>
            <person name="Kulp D."/>
            <person name="Lai Z."/>
            <person name="Lasko P."/>
            <person name="Lei Y."/>
            <person name="Levitsky A.A."/>
            <person name="Li J.H."/>
            <person name="Li Z."/>
            <person name="Liang Y."/>
            <person name="Lin X."/>
            <person name="Liu X."/>
            <person name="Mattei B."/>
            <person name="McIntosh T.C."/>
            <person name="McLeod M.P."/>
            <person name="McPherson D."/>
            <person name="Merkulov G."/>
            <person name="Milshina N.V."/>
            <person name="Mobarry C."/>
            <person name="Morris J."/>
            <person name="Moshrefi A."/>
            <person name="Mount S.M."/>
            <person name="Moy M."/>
            <person name="Murphy B."/>
            <person name="Murphy L."/>
            <person name="Muzny D.M."/>
            <person name="Nelson D.L."/>
            <person name="Nelson D.R."/>
            <person name="Nelson K.A."/>
            <person name="Nixon K."/>
            <person name="Nusskern D.R."/>
            <person name="Pacleb J.M."/>
            <person name="Palazzolo M."/>
            <person name="Pittman G.S."/>
            <person name="Pan S."/>
            <person name="Pollard J."/>
            <person name="Puri V."/>
            <person name="Reese M.G."/>
            <person name="Reinert K."/>
            <person name="Remington K."/>
            <person name="Saunders R.D.C."/>
            <person name="Scheeler F."/>
            <person name="Shen H."/>
            <person name="Shue B.C."/>
            <person name="Siden-Kiamos I."/>
            <person name="Simpson M."/>
            <person name="Skupski M.P."/>
            <person name="Smith T.J."/>
            <person name="Spier E."/>
            <person name="Spradling A.C."/>
            <person name="Stapleton M."/>
            <person name="Strong R."/>
            <person name="Sun E."/>
            <person name="Svirskas R."/>
            <person name="Tector C."/>
            <person name="Turner R."/>
            <person name="Venter E."/>
            <person name="Wang A.H."/>
            <person name="Wang X."/>
            <person name="Wang Z.-Y."/>
            <person name="Wassarman D.A."/>
            <person name="Weinstock G.M."/>
            <person name="Weissenbach J."/>
            <person name="Williams S.M."/>
            <person name="Woodage T."/>
            <person name="Worley K.C."/>
            <person name="Wu D."/>
            <person name="Yang S."/>
            <person name="Yao Q.A."/>
            <person name="Ye J."/>
            <person name="Yeh R.-F."/>
            <person name="Zaveri J.S."/>
            <person name="Zhan M."/>
            <person name="Zhang G."/>
            <person name="Zhao Q."/>
            <person name="Zheng L."/>
            <person name="Zheng X.H."/>
            <person name="Zhong F.N."/>
            <person name="Zhong W."/>
            <person name="Zhou X."/>
            <person name="Zhu S.C."/>
            <person name="Zhu X."/>
            <person name="Smith H.O."/>
            <person name="Gibbs R.A."/>
            <person name="Myers E.W."/>
            <person name="Rubin G.M."/>
            <person name="Venter J.C."/>
        </authorList>
    </citation>
    <scope>NUCLEOTIDE SEQUENCE [LARGE SCALE GENOMIC DNA]</scope>
    <source>
        <strain evidence="5">Berkeley</strain>
    </source>
</reference>
<reference evidence="13 16" key="5">
    <citation type="journal article" date="2002" name="Genome Biol.">
        <title>Annotation of the Drosophila melanogaster euchromatic genome: a systematic review.</title>
        <authorList>
            <person name="Misra S."/>
            <person name="Crosby M.A."/>
            <person name="Mungall C.J."/>
            <person name="Matthews B.B."/>
            <person name="Campbell K.S."/>
            <person name="Hradecky P."/>
            <person name="Huang Y."/>
            <person name="Kaminker J.S."/>
            <person name="Millburn G.H."/>
            <person name="Prochnik S.E."/>
            <person name="Smith C.D."/>
            <person name="Tupy J.L."/>
            <person name="Whitfield E.J."/>
            <person name="Bayraktaroglu L."/>
            <person name="Berman B.P."/>
            <person name="Bettencourt B.R."/>
            <person name="Celniker S.E."/>
            <person name="de Grey A.D.N.J."/>
            <person name="Drysdale R.A."/>
            <person name="Harris N.L."/>
            <person name="Richter J."/>
            <person name="Russo S."/>
            <person name="Schroeder A.J."/>
            <person name="Shu S.Q."/>
            <person name="Stapleton M."/>
            <person name="Yamada C."/>
            <person name="Ashburner M."/>
            <person name="Gelbart W.M."/>
            <person name="Rubin G.M."/>
            <person name="Lewis S.E."/>
        </authorList>
    </citation>
    <scope>GENOME REANNOTATION</scope>
    <source>
        <strain>Berkeley</strain>
    </source>
</reference>
<reference evidence="17" key="6">
    <citation type="journal article" date="2002" name="Genome Biol.">
        <title>A Drosophila full-length cDNA resource.</title>
        <authorList>
            <person name="Stapleton M."/>
            <person name="Carlson J.W."/>
            <person name="Brokstein P."/>
            <person name="Yu C."/>
            <person name="Champe M."/>
            <person name="George R.A."/>
            <person name="Guarin H."/>
            <person name="Kronmiller B."/>
            <person name="Pacleb J.M."/>
            <person name="Park S."/>
            <person name="Wan K.H."/>
            <person name="Rubin G.M."/>
            <person name="Celniker S.E."/>
        </authorList>
    </citation>
    <scope>NUCLEOTIDE SEQUENCE [LARGE SCALE MRNA]</scope>
    <source>
        <strain evidence="17">Berkeley</strain>
        <tissue evidence="7">Embryo</tissue>
    </source>
</reference>
<reference evidence="13" key="7">
    <citation type="journal article" date="2003" name="J. Cell Biol.">
        <title>The Drosophila nucleoporin DNup88 localizes DNup214 and CRM1 on the nuclear envelope and attenuates NES-mediated nuclear export.</title>
        <authorList>
            <person name="Roth P."/>
            <person name="Xylourgidis N."/>
            <person name="Sabri N."/>
            <person name="Uv A.E."/>
            <person name="Fornerod M."/>
            <person name="Samakovlis C."/>
        </authorList>
    </citation>
    <scope>FUNCTION</scope>
    <scope>ASSOCIATION WITH NUCLEAR PORE COMPLEX</scope>
    <scope>INTERACTION WITH MBO</scope>
    <scope>SUBCELLULAR LOCATION</scope>
    <scope>DEVELOPMENTAL STAGE</scope>
    <scope>MUTAGENESIS OF MET-412 AND 487-ASN--GLU-1063</scope>
</reference>
<reference key="8">
    <citation type="journal article" date="2005" name="Oncogene">
        <title>Drosophila caliban, a nuclear export mediator, can function as a tumor suppressor in human lung cancer cells.</title>
        <authorList>
            <person name="Bi X."/>
            <person name="Jones T."/>
            <person name="Abbasi F."/>
            <person name="Lee H."/>
            <person name="Stultz B."/>
            <person name="Hursh D.A."/>
            <person name="Mortin M.A."/>
        </authorList>
    </citation>
    <scope>FUNCTION</scope>
    <scope>INTERACTION WITH CLBN</scope>
</reference>
<reference key="9">
    <citation type="journal article" date="2006" name="J. Cell Sci.">
        <title>The nucleoporin Nup214 sequesters CRM1 at the nuclear rim and modulates NFkappaB activation in Drosophila.</title>
        <authorList>
            <person name="Xylourgidis N."/>
            <person name="Roth P."/>
            <person name="Sabri N."/>
            <person name="Tsarouhas V."/>
            <person name="Samakovlis C."/>
        </authorList>
    </citation>
    <scope>FUNCTION</scope>
    <scope>ASSOCIATION WITH NUCLEAR PORE COMPLEX</scope>
    <scope>INTERACTION WITH NUP214 AND MBO</scope>
    <scope>SUBCELLULAR LOCATION</scope>
    <scope>MUTAGENESIS OF MET-412 AND 487-ASN--GLU-1063</scope>
</reference>
<reference key="10">
    <citation type="journal article" date="2015" name="J. Biol. Chem.">
        <title>Drosophila Low Temperature Viability Protein 1 (LTV1) Is Required for Ribosome Biogenesis and Cell Growth Downstream of Drosophila Myc (dMyc).</title>
        <authorList>
            <person name="Kim W."/>
            <person name="Kim H.D."/>
            <person name="Jung Y."/>
            <person name="Kim J."/>
            <person name="Chung J."/>
        </authorList>
    </citation>
    <scope>FUNCTION</scope>
    <scope>DISRUPTION PHENOTYPE</scope>
</reference>
<reference key="11">
    <citation type="journal article" date="2019" name="Cell">
        <title>Nuclear Pores Assemble from Nucleoporin Condensates During Oogenesis.</title>
        <authorList>
            <person name="Hampoelz B."/>
            <person name="Schwarz A."/>
            <person name="Ronchi P."/>
            <person name="Bragulat-Teixidor H."/>
            <person name="Tischer C."/>
            <person name="Gaspar I."/>
            <person name="Ephrussi A."/>
            <person name="Schwab Y."/>
            <person name="Beck M."/>
        </authorList>
    </citation>
    <scope>FUNCTION</scope>
</reference>
<keyword id="KW-0472">Membrane</keyword>
<keyword id="KW-0509">mRNA transport</keyword>
<keyword id="KW-0539">Nucleus</keyword>
<keyword id="KW-0653">Protein transport</keyword>
<keyword id="KW-1185">Reference proteome</keyword>
<keyword id="KW-0813">Transport</keyword>
<accession>Q9TVM2</accession>
<accession>Q9I7N7</accession>
<accession>Q9U699</accession>
<sequence length="1063" mass="122799">MATMLTSDEAGKLLDFSQKLDINLLDKIVEVVYTAQGEQLRLAQSILTTLKEHPEAWTRVDSILEYSQNQRTKFYALQILEEVIKTRWKVLPRNQCEGIKKYVVSLIIKTSSDPIVMEQNKVYLNKLNMILVHILKREWPRNWETFISDIVGASKTNESLCMNNMVILKNLSEEVFDFSQGQITQTKAKHLKDTMCSEFSQIFTLCSFVLENSMNAALIHVTLETLLRFLNWIPLGYIFETQQIETLIFKFLSVPMFRNVTLKCLSEIAGLTAANYDENFATLFKDTMVQLEQIVGQNMNMNHVFKHGSDTEQELVLNLAMFLCTFLKEHGKLVEDAKYVDYLNQALMYLVMISEVEDVEVFKICLEYWNSLVEDLYNSEFFHPTLESTKRQQVYPRRRFYAPILSKVRFIMISRMAKPEEVLVVENENGEVVREFMKDTNSINLYKNMRETLVFLTHLDSVDTDRIMTLKLLNQVNGSEFSWKNLNTLCWAIGSISGAFCEEDEKRFLVTVIKDLLGLCEQKKGKDNKAIIASNIMYVVGQYPRFLRAHWKFLKTVVNKLFEFMHETHDGVQDMACDTFIKIAIKCRRYFVTIQPNEACTFIDEILTTMSSIICDLQPQQVHTFYEAVGYMISAQVDQVQQDVLIERYMQLPNQVWDDIISRASKNVDFLKNMTAVKQLGSILKTNVAACKALGHAYVIQLGRIYLDMLNVYKITSENIIQAIEVNGVNVNNQPLIKTMHVVKKETLNLISEWVSRSNDNQLVMDNFIPPLLDAILLDYQRCKVPSAREPKVLSAMAIIVHKLRQHITNEVPKIFDAVFECTLDMINKNFEDFPQHRLSFYELLQAVNAHCFKAFLNIPPAQFKLVFDSVVWAFKHTMRNVADMGLNILFKMLQNLDQHPGAAQSFYQTYFTDILMQIFSVVTDTSHTAGLPNHAIILAYMFSLVENRKITVNLGPIPDNMIFIQEYVASLLKSAFTHLSDNQVKVFVTGLFNLDENVQAFKEHLRDFLIQIREATGEDDSDLYLEEREAALAEEQSNKHQMQRNIPGMLNPHELPEDMQDE</sequence>
<evidence type="ECO:0000255" key="1"/>
<evidence type="ECO:0000255" key="2">
    <source>
        <dbReference type="PROSITE-ProRule" id="PRU00115"/>
    </source>
</evidence>
<evidence type="ECO:0000256" key="3">
    <source>
        <dbReference type="SAM" id="MobiDB-lite"/>
    </source>
</evidence>
<evidence type="ECO:0000269" key="4">
    <source>
    </source>
</evidence>
<evidence type="ECO:0000269" key="5">
    <source>
    </source>
</evidence>
<evidence type="ECO:0000269" key="6">
    <source>
    </source>
</evidence>
<evidence type="ECO:0000269" key="7">
    <source>
    </source>
</evidence>
<evidence type="ECO:0000269" key="8">
    <source>
    </source>
</evidence>
<evidence type="ECO:0000269" key="9">
    <source>
    </source>
</evidence>
<evidence type="ECO:0000269" key="10">
    <source>
    </source>
</evidence>
<evidence type="ECO:0000269" key="11">
    <source>
    </source>
</evidence>
<evidence type="ECO:0000269" key="12">
    <source>
    </source>
</evidence>
<evidence type="ECO:0000305" key="13"/>
<evidence type="ECO:0000312" key="14">
    <source>
        <dbReference type="EMBL" id="AAD55778.1"/>
    </source>
</evidence>
<evidence type="ECO:0000312" key="15">
    <source>
        <dbReference type="EMBL" id="AAF01341.1"/>
    </source>
</evidence>
<evidence type="ECO:0000312" key="16">
    <source>
        <dbReference type="EMBL" id="AAG22423.2"/>
    </source>
</evidence>
<evidence type="ECO:0000312" key="17">
    <source>
        <dbReference type="EMBL" id="AAL90296.1"/>
    </source>
</evidence>
<evidence type="ECO:0000312" key="18">
    <source>
        <dbReference type="EMBL" id="CAB53566.1"/>
    </source>
</evidence>
<evidence type="ECO:0000312" key="19">
    <source>
        <dbReference type="FlyBase" id="FBgn0020497"/>
    </source>
</evidence>
<name>XPO1_DROME</name>
<feature type="chain" id="PRO_0000204708" description="Exportin-1">
    <location>
        <begin position="1"/>
        <end position="1063"/>
    </location>
</feature>
<feature type="domain" description="Importin N-terminal" evidence="2">
    <location>
        <begin position="43"/>
        <end position="109"/>
    </location>
</feature>
<feature type="region of interest" description="Disordered" evidence="3">
    <location>
        <begin position="1034"/>
        <end position="1063"/>
    </location>
</feature>
<feature type="mutagenesis site" description="Results in lethality at larval stage. This is reversed by removal of one chromosome copy of Nup214. Fails to export proteins containing leucine-rich nuclear export signal (NES) from the nucleus." evidence="8 10">
    <original>M</original>
    <variation>R</variation>
    <location>
        <position position="412"/>
    </location>
</feature>
<feature type="mutagenesis site" description="Fails to export proteins containing leucine-rich nuclear export signal (NES) from the nucleus." evidence="8 10">
    <location>
        <begin position="487"/>
        <end position="1063"/>
    </location>
</feature>
<feature type="sequence conflict" description="In Ref. 2; AAF01341." evidence="13" ref="2">
    <original>T</original>
    <variation>A</variation>
    <location>
        <position position="1017"/>
    </location>
</feature>